<protein>
    <recommendedName>
        <fullName>Transmembrane emp24 domain-containing protein 1</fullName>
    </recommendedName>
    <alternativeName>
        <fullName>Interleukin-1 receptor-like 1 ligand</fullName>
    </alternativeName>
    <alternativeName>
        <fullName>Putative T1/ST2 receptor-binding protein</fullName>
    </alternativeName>
    <alternativeName>
        <fullName>p24 family protein gamma-1</fullName>
        <shortName>p24gamma1</shortName>
    </alternativeName>
</protein>
<comment type="function">
    <text evidence="2">Potential role in vesicular protein trafficking, mainly in the early secretory pathway. May act as a cargo receptor at the lumenal side for incorporation of secretory cargo molecules into transport vesicles and may be involved in vesicle coat formation at the cytoplasmic side. Plays a positive role in IL-33-mediated IL-8 and IL-6 production by interacting with interleukin-33 receptor IL1RL1. Plays also a role in the modulation of innate immune signaling through the cGAS-STING pathway by interacting with RNF26.</text>
</comment>
<comment type="subunit">
    <text evidence="2">Homodimer in endoplasmic reticulum, endoplasmic reticulum-Golgi intermediate compartment and cis-Golgi network. Interacts with IL1RL1. Interacts with RNF26; this interaction is important to modulate innate immune signaling through the cGAS-STING pathway.</text>
</comment>
<comment type="subcellular location">
    <subcellularLocation>
        <location evidence="2">Cell membrane</location>
        <topology evidence="3">Single-pass type I membrane protein</topology>
    </subcellularLocation>
    <subcellularLocation>
        <location evidence="2">Endoplasmic reticulum membrane</location>
        <topology evidence="3">Single-pass type I membrane protein</topology>
    </subcellularLocation>
    <subcellularLocation>
        <location evidence="2">Golgi apparatus</location>
        <location evidence="2">cis-Golgi network membrane</location>
        <topology evidence="3">Single-pass type I membrane protein</topology>
    </subcellularLocation>
    <subcellularLocation>
        <location evidence="2">Endoplasmic reticulum-Golgi intermediate compartment membrane</location>
        <topology evidence="3">Single-pass type I membrane protein</topology>
    </subcellularLocation>
</comment>
<comment type="alternative products">
    <event type="alternative splicing"/>
    <isoform>
        <id>Q3V009-1</id>
        <name>1</name>
        <sequence type="displayed"/>
    </isoform>
    <isoform>
        <id>Q3V009-2</id>
        <name>2</name>
        <sequence type="described" ref="VSP_020135 VSP_020136"/>
    </isoform>
</comment>
<comment type="tissue specificity">
    <text evidence="5">Widely expressed.</text>
</comment>
<comment type="similarity">
    <text evidence="7">Belongs to the EMP24/GP25L family.</text>
</comment>
<evidence type="ECO:0000250" key="1"/>
<evidence type="ECO:0000250" key="2">
    <source>
        <dbReference type="UniProtKB" id="Q13445"/>
    </source>
</evidence>
<evidence type="ECO:0000255" key="3"/>
<evidence type="ECO:0000255" key="4">
    <source>
        <dbReference type="PROSITE-ProRule" id="PRU00096"/>
    </source>
</evidence>
<evidence type="ECO:0000269" key="5">
    <source>
    </source>
</evidence>
<evidence type="ECO:0000303" key="6">
    <source>
    </source>
</evidence>
<evidence type="ECO:0000305" key="7"/>
<proteinExistence type="evidence at protein level"/>
<dbReference type="EMBL" id="AK133513">
    <property type="protein sequence ID" value="BAE21696.1"/>
    <property type="molecule type" value="mRNA"/>
</dbReference>
<dbReference type="EMBL" id="AK160525">
    <property type="protein sequence ID" value="BAE35843.1"/>
    <property type="molecule type" value="mRNA"/>
</dbReference>
<dbReference type="EMBL" id="U41805">
    <property type="protein sequence ID" value="AAC52472.1"/>
    <property type="molecule type" value="mRNA"/>
</dbReference>
<dbReference type="CCDS" id="CCDS22904.1">
    <molecule id="Q3V009-1"/>
</dbReference>
<dbReference type="RefSeq" id="NP_001311439.1">
    <property type="nucleotide sequence ID" value="NM_001324510.1"/>
</dbReference>
<dbReference type="RefSeq" id="NP_034874.2">
    <molecule id="Q3V009-1"/>
    <property type="nucleotide sequence ID" value="NM_010744.4"/>
</dbReference>
<dbReference type="SMR" id="Q3V009"/>
<dbReference type="BioGRID" id="201249">
    <property type="interactions" value="2"/>
</dbReference>
<dbReference type="FunCoup" id="Q3V009">
    <property type="interactions" value="1674"/>
</dbReference>
<dbReference type="IntAct" id="Q3V009">
    <property type="interactions" value="1"/>
</dbReference>
<dbReference type="STRING" id="10090.ENSMUSP00000034698"/>
<dbReference type="GlyGen" id="Q3V009">
    <property type="glycosylation" value="1 site"/>
</dbReference>
<dbReference type="PhosphoSitePlus" id="Q3V009"/>
<dbReference type="SwissPalm" id="Q3V009"/>
<dbReference type="PaxDb" id="10090-ENSMUSP00000034698"/>
<dbReference type="PeptideAtlas" id="Q3V009"/>
<dbReference type="ProteomicsDB" id="259424">
    <molecule id="Q3V009-1"/>
</dbReference>
<dbReference type="ProteomicsDB" id="259425">
    <molecule id="Q3V009-2"/>
</dbReference>
<dbReference type="Pumba" id="Q3V009"/>
<dbReference type="Antibodypedia" id="2281">
    <property type="antibodies" value="215 antibodies from 25 providers"/>
</dbReference>
<dbReference type="DNASU" id="17083"/>
<dbReference type="Ensembl" id="ENSMUST00000034698.9">
    <molecule id="Q3V009-1"/>
    <property type="protein sequence ID" value="ENSMUSP00000034698.8"/>
    <property type="gene ID" value="ENSMUSG00000032180.12"/>
</dbReference>
<dbReference type="GeneID" id="17083"/>
<dbReference type="KEGG" id="mmu:17083"/>
<dbReference type="UCSC" id="uc009olp.1">
    <molecule id="Q3V009-1"/>
    <property type="organism name" value="mouse"/>
</dbReference>
<dbReference type="AGR" id="MGI:106201"/>
<dbReference type="CTD" id="11018"/>
<dbReference type="MGI" id="MGI:106201">
    <property type="gene designation" value="Tmed1"/>
</dbReference>
<dbReference type="VEuPathDB" id="HostDB:ENSMUSG00000032180"/>
<dbReference type="eggNOG" id="KOG3287">
    <property type="taxonomic scope" value="Eukaryota"/>
</dbReference>
<dbReference type="GeneTree" id="ENSGT00940000158445"/>
<dbReference type="HOGENOM" id="CLU_066963_0_0_1"/>
<dbReference type="InParanoid" id="Q3V009"/>
<dbReference type="OMA" id="AGDYMIC"/>
<dbReference type="OrthoDB" id="5976732at2759"/>
<dbReference type="PhylomeDB" id="Q3V009"/>
<dbReference type="TreeFam" id="TF313000"/>
<dbReference type="BioGRID-ORCS" id="17083">
    <property type="hits" value="1 hit in 81 CRISPR screens"/>
</dbReference>
<dbReference type="ChiTaRS" id="Tmed1">
    <property type="organism name" value="mouse"/>
</dbReference>
<dbReference type="PRO" id="PR:Q3V009"/>
<dbReference type="Proteomes" id="UP000000589">
    <property type="component" value="Chromosome 9"/>
</dbReference>
<dbReference type="RNAct" id="Q3V009">
    <property type="molecule type" value="protein"/>
</dbReference>
<dbReference type="Bgee" id="ENSMUSG00000032180">
    <property type="expression patterns" value="Expressed in right kidney and 223 other cell types or tissues"/>
</dbReference>
<dbReference type="ExpressionAtlas" id="Q3V009">
    <property type="expression patterns" value="baseline and differential"/>
</dbReference>
<dbReference type="GO" id="GO:0005789">
    <property type="term" value="C:endoplasmic reticulum membrane"/>
    <property type="evidence" value="ECO:0007669"/>
    <property type="project" value="UniProtKB-SubCell"/>
</dbReference>
<dbReference type="GO" id="GO:0033116">
    <property type="term" value="C:endoplasmic reticulum-Golgi intermediate compartment membrane"/>
    <property type="evidence" value="ECO:0007669"/>
    <property type="project" value="UniProtKB-SubCell"/>
</dbReference>
<dbReference type="GO" id="GO:0005794">
    <property type="term" value="C:Golgi apparatus"/>
    <property type="evidence" value="ECO:0007669"/>
    <property type="project" value="UniProtKB-SubCell"/>
</dbReference>
<dbReference type="GO" id="GO:0005886">
    <property type="term" value="C:plasma membrane"/>
    <property type="evidence" value="ECO:0007669"/>
    <property type="project" value="UniProtKB-SubCell"/>
</dbReference>
<dbReference type="GO" id="GO:0015031">
    <property type="term" value="P:protein transport"/>
    <property type="evidence" value="ECO:0007669"/>
    <property type="project" value="UniProtKB-KW"/>
</dbReference>
<dbReference type="InterPro" id="IPR015720">
    <property type="entry name" value="Emp24-like"/>
</dbReference>
<dbReference type="InterPro" id="IPR009038">
    <property type="entry name" value="GOLD_dom"/>
</dbReference>
<dbReference type="InterPro" id="IPR036598">
    <property type="entry name" value="GOLD_dom_sf"/>
</dbReference>
<dbReference type="PANTHER" id="PTHR22811">
    <property type="entry name" value="TRANSMEMBRANE EMP24 DOMAIN-CONTAINING PROTEIN"/>
    <property type="match status" value="1"/>
</dbReference>
<dbReference type="Pfam" id="PF01105">
    <property type="entry name" value="EMP24_GP25L"/>
    <property type="match status" value="1"/>
</dbReference>
<dbReference type="SMART" id="SM01190">
    <property type="entry name" value="EMP24_GP25L"/>
    <property type="match status" value="1"/>
</dbReference>
<dbReference type="SUPFAM" id="SSF101576">
    <property type="entry name" value="Supernatant protein factor (SPF), C-terminal domain"/>
    <property type="match status" value="1"/>
</dbReference>
<dbReference type="PROSITE" id="PS50866">
    <property type="entry name" value="GOLD"/>
    <property type="match status" value="1"/>
</dbReference>
<sequence length="227" mass="25263">MMAAGAAVALALWLLLPAVGVGEAGPPPIQDGEFTFLLPAGRKQCFYQSAPANASLETEYQVIGGAGLDVDFTLESPQGVLLVSESRKADGVHTVEPTEAGDYRLCFDNSFSTISEKLVFFELIFDSFQDEEEVEGWAEAVEPEEMLDVKMEDIKESIETMRTRLERSIQMLTLLRAFEARDRNLQEDNLERVNFWSAANVAVLLLVAVLQVCTLKRFFHDKRPVPT</sequence>
<accession>Q3V009</accession>
<accession>Q3TUX8</accession>
<accession>Q61073</accession>
<accession>Q91YK3</accession>
<feature type="signal peptide" evidence="1">
    <location>
        <begin position="1"/>
        <end position="24"/>
    </location>
</feature>
<feature type="chain" id="PRO_0000248020" description="Transmembrane emp24 domain-containing protein 1">
    <location>
        <begin position="25"/>
        <end position="227"/>
    </location>
</feature>
<feature type="topological domain" description="Extracellular" evidence="3">
    <location>
        <begin position="25"/>
        <end position="194"/>
    </location>
</feature>
<feature type="transmembrane region" description="Helical" evidence="3">
    <location>
        <begin position="195"/>
        <end position="215"/>
    </location>
</feature>
<feature type="topological domain" description="Cytoplasmic" evidence="3">
    <location>
        <begin position="216"/>
        <end position="227"/>
    </location>
</feature>
<feature type="domain" description="GOLD" evidence="4">
    <location>
        <begin position="43"/>
        <end position="125"/>
    </location>
</feature>
<feature type="coiled-coil region" evidence="3">
    <location>
        <begin position="145"/>
        <end position="170"/>
    </location>
</feature>
<feature type="short sequence motif" description="COPI vesicle coat-binding" evidence="3">
    <location>
        <begin position="218"/>
        <end position="227"/>
    </location>
</feature>
<feature type="short sequence motif" description="COPII vesicle coat-binding" evidence="3">
    <location>
        <begin position="218"/>
        <end position="219"/>
    </location>
</feature>
<feature type="splice variant" id="VSP_020135" description="In isoform 2." evidence="6">
    <location>
        <begin position="1"/>
        <end position="85"/>
    </location>
</feature>
<feature type="splice variant" id="VSP_020136" description="In isoform 2." evidence="6">
    <original>SRKADGVHT</original>
    <variation>MLVLRPSTR</variation>
    <location>
        <begin position="86"/>
        <end position="94"/>
    </location>
</feature>
<name>TMED1_MOUSE</name>
<organism>
    <name type="scientific">Mus musculus</name>
    <name type="common">Mouse</name>
    <dbReference type="NCBI Taxonomy" id="10090"/>
    <lineage>
        <taxon>Eukaryota</taxon>
        <taxon>Metazoa</taxon>
        <taxon>Chordata</taxon>
        <taxon>Craniata</taxon>
        <taxon>Vertebrata</taxon>
        <taxon>Euteleostomi</taxon>
        <taxon>Mammalia</taxon>
        <taxon>Eutheria</taxon>
        <taxon>Euarchontoglires</taxon>
        <taxon>Glires</taxon>
        <taxon>Rodentia</taxon>
        <taxon>Myomorpha</taxon>
        <taxon>Muroidea</taxon>
        <taxon>Muridae</taxon>
        <taxon>Murinae</taxon>
        <taxon>Mus</taxon>
        <taxon>Mus</taxon>
    </lineage>
</organism>
<reference key="1">
    <citation type="journal article" date="2005" name="Science">
        <title>The transcriptional landscape of the mammalian genome.</title>
        <authorList>
            <person name="Carninci P."/>
            <person name="Kasukawa T."/>
            <person name="Katayama S."/>
            <person name="Gough J."/>
            <person name="Frith M.C."/>
            <person name="Maeda N."/>
            <person name="Oyama R."/>
            <person name="Ravasi T."/>
            <person name="Lenhard B."/>
            <person name="Wells C."/>
            <person name="Kodzius R."/>
            <person name="Shimokawa K."/>
            <person name="Bajic V.B."/>
            <person name="Brenner S.E."/>
            <person name="Batalov S."/>
            <person name="Forrest A.R."/>
            <person name="Zavolan M."/>
            <person name="Davis M.J."/>
            <person name="Wilming L.G."/>
            <person name="Aidinis V."/>
            <person name="Allen J.E."/>
            <person name="Ambesi-Impiombato A."/>
            <person name="Apweiler R."/>
            <person name="Aturaliya R.N."/>
            <person name="Bailey T.L."/>
            <person name="Bansal M."/>
            <person name="Baxter L."/>
            <person name="Beisel K.W."/>
            <person name="Bersano T."/>
            <person name="Bono H."/>
            <person name="Chalk A.M."/>
            <person name="Chiu K.P."/>
            <person name="Choudhary V."/>
            <person name="Christoffels A."/>
            <person name="Clutterbuck D.R."/>
            <person name="Crowe M.L."/>
            <person name="Dalla E."/>
            <person name="Dalrymple B.P."/>
            <person name="de Bono B."/>
            <person name="Della Gatta G."/>
            <person name="di Bernardo D."/>
            <person name="Down T."/>
            <person name="Engstrom P."/>
            <person name="Fagiolini M."/>
            <person name="Faulkner G."/>
            <person name="Fletcher C.F."/>
            <person name="Fukushima T."/>
            <person name="Furuno M."/>
            <person name="Futaki S."/>
            <person name="Gariboldi M."/>
            <person name="Georgii-Hemming P."/>
            <person name="Gingeras T.R."/>
            <person name="Gojobori T."/>
            <person name="Green R.E."/>
            <person name="Gustincich S."/>
            <person name="Harbers M."/>
            <person name="Hayashi Y."/>
            <person name="Hensch T.K."/>
            <person name="Hirokawa N."/>
            <person name="Hill D."/>
            <person name="Huminiecki L."/>
            <person name="Iacono M."/>
            <person name="Ikeo K."/>
            <person name="Iwama A."/>
            <person name="Ishikawa T."/>
            <person name="Jakt M."/>
            <person name="Kanapin A."/>
            <person name="Katoh M."/>
            <person name="Kawasawa Y."/>
            <person name="Kelso J."/>
            <person name="Kitamura H."/>
            <person name="Kitano H."/>
            <person name="Kollias G."/>
            <person name="Krishnan S.P."/>
            <person name="Kruger A."/>
            <person name="Kummerfeld S.K."/>
            <person name="Kurochkin I.V."/>
            <person name="Lareau L.F."/>
            <person name="Lazarevic D."/>
            <person name="Lipovich L."/>
            <person name="Liu J."/>
            <person name="Liuni S."/>
            <person name="McWilliam S."/>
            <person name="Madan Babu M."/>
            <person name="Madera M."/>
            <person name="Marchionni L."/>
            <person name="Matsuda H."/>
            <person name="Matsuzawa S."/>
            <person name="Miki H."/>
            <person name="Mignone F."/>
            <person name="Miyake S."/>
            <person name="Morris K."/>
            <person name="Mottagui-Tabar S."/>
            <person name="Mulder N."/>
            <person name="Nakano N."/>
            <person name="Nakauchi H."/>
            <person name="Ng P."/>
            <person name="Nilsson R."/>
            <person name="Nishiguchi S."/>
            <person name="Nishikawa S."/>
            <person name="Nori F."/>
            <person name="Ohara O."/>
            <person name="Okazaki Y."/>
            <person name="Orlando V."/>
            <person name="Pang K.C."/>
            <person name="Pavan W.J."/>
            <person name="Pavesi G."/>
            <person name="Pesole G."/>
            <person name="Petrovsky N."/>
            <person name="Piazza S."/>
            <person name="Reed J."/>
            <person name="Reid J.F."/>
            <person name="Ring B.Z."/>
            <person name="Ringwald M."/>
            <person name="Rost B."/>
            <person name="Ruan Y."/>
            <person name="Salzberg S.L."/>
            <person name="Sandelin A."/>
            <person name="Schneider C."/>
            <person name="Schoenbach C."/>
            <person name="Sekiguchi K."/>
            <person name="Semple C.A."/>
            <person name="Seno S."/>
            <person name="Sessa L."/>
            <person name="Sheng Y."/>
            <person name="Shibata Y."/>
            <person name="Shimada H."/>
            <person name="Shimada K."/>
            <person name="Silva D."/>
            <person name="Sinclair B."/>
            <person name="Sperling S."/>
            <person name="Stupka E."/>
            <person name="Sugiura K."/>
            <person name="Sultana R."/>
            <person name="Takenaka Y."/>
            <person name="Taki K."/>
            <person name="Tammoja K."/>
            <person name="Tan S.L."/>
            <person name="Tang S."/>
            <person name="Taylor M.S."/>
            <person name="Tegner J."/>
            <person name="Teichmann S.A."/>
            <person name="Ueda H.R."/>
            <person name="van Nimwegen E."/>
            <person name="Verardo R."/>
            <person name="Wei C.L."/>
            <person name="Yagi K."/>
            <person name="Yamanishi H."/>
            <person name="Zabarovsky E."/>
            <person name="Zhu S."/>
            <person name="Zimmer A."/>
            <person name="Hide W."/>
            <person name="Bult C."/>
            <person name="Grimmond S.M."/>
            <person name="Teasdale R.D."/>
            <person name="Liu E.T."/>
            <person name="Brusic V."/>
            <person name="Quackenbush J."/>
            <person name="Wahlestedt C."/>
            <person name="Mattick J.S."/>
            <person name="Hume D.A."/>
            <person name="Kai C."/>
            <person name="Sasaki D."/>
            <person name="Tomaru Y."/>
            <person name="Fukuda S."/>
            <person name="Kanamori-Katayama M."/>
            <person name="Suzuki M."/>
            <person name="Aoki J."/>
            <person name="Arakawa T."/>
            <person name="Iida J."/>
            <person name="Imamura K."/>
            <person name="Itoh M."/>
            <person name="Kato T."/>
            <person name="Kawaji H."/>
            <person name="Kawagashira N."/>
            <person name="Kawashima T."/>
            <person name="Kojima M."/>
            <person name="Kondo S."/>
            <person name="Konno H."/>
            <person name="Nakano K."/>
            <person name="Ninomiya N."/>
            <person name="Nishio T."/>
            <person name="Okada M."/>
            <person name="Plessy C."/>
            <person name="Shibata K."/>
            <person name="Shiraki T."/>
            <person name="Suzuki S."/>
            <person name="Tagami M."/>
            <person name="Waki K."/>
            <person name="Watahiki A."/>
            <person name="Okamura-Oho Y."/>
            <person name="Suzuki H."/>
            <person name="Kawai J."/>
            <person name="Hayashizaki Y."/>
        </authorList>
    </citation>
    <scope>NUCLEOTIDE SEQUENCE [LARGE SCALE MRNA] (ISOFORMS 1 AND 2)</scope>
    <source>
        <strain>C57BL/6J</strain>
        <tissue>Embryonic stem cell</tissue>
        <tissue>Ovary</tissue>
        <tissue>Uterus</tissue>
    </source>
</reference>
<reference key="2">
    <citation type="journal article" date="1996" name="J. Biol. Chem.">
        <title>Cloning of a putative ligand for the T1/ST2 receptor.</title>
        <authorList>
            <person name="Gayle M.A."/>
            <person name="Slack J.L."/>
            <person name="Bonnert T.P."/>
            <person name="Renshaw B.R."/>
            <person name="Sonoda G."/>
            <person name="Taguchi T."/>
            <person name="Testa J.R."/>
            <person name="Dower S.K."/>
            <person name="Sims J.E."/>
        </authorList>
    </citation>
    <scope>NUCLEOTIDE SEQUENCE [MRNA] OF 6-227 (ISOFORM 1)</scope>
    <scope>TISSUE SPECIFICITY</scope>
    <source>
        <tissue>Pre-B cell</tissue>
    </source>
</reference>
<reference key="3">
    <citation type="journal article" date="2010" name="Cell">
        <title>A tissue-specific atlas of mouse protein phosphorylation and expression.</title>
        <authorList>
            <person name="Huttlin E.L."/>
            <person name="Jedrychowski M.P."/>
            <person name="Elias J.E."/>
            <person name="Goswami T."/>
            <person name="Rad R."/>
            <person name="Beausoleil S.A."/>
            <person name="Villen J."/>
            <person name="Haas W."/>
            <person name="Sowa M.E."/>
            <person name="Gygi S.P."/>
        </authorList>
    </citation>
    <scope>IDENTIFICATION BY MASS SPECTROMETRY [LARGE SCALE ANALYSIS]</scope>
    <source>
        <tissue>Heart</tissue>
        <tissue>Kidney</tissue>
        <tissue>Liver</tissue>
        <tissue>Lung</tissue>
        <tissue>Pancreas</tissue>
        <tissue>Testis</tissue>
    </source>
</reference>
<keyword id="KW-0025">Alternative splicing</keyword>
<keyword id="KW-1003">Cell membrane</keyword>
<keyword id="KW-0175">Coiled coil</keyword>
<keyword id="KW-0256">Endoplasmic reticulum</keyword>
<keyword id="KW-0333">Golgi apparatus</keyword>
<keyword id="KW-0472">Membrane</keyword>
<keyword id="KW-0653">Protein transport</keyword>
<keyword id="KW-1185">Reference proteome</keyword>
<keyword id="KW-0732">Signal</keyword>
<keyword id="KW-0812">Transmembrane</keyword>
<keyword id="KW-1133">Transmembrane helix</keyword>
<keyword id="KW-0813">Transport</keyword>
<gene>
    <name type="primary">Tmed1</name>
    <name type="synonym">Il1rl1l</name>
</gene>